<sequence>MKVYDGSQTESPEQSTPERIKVGIAEYKVTTEPAMLTTSGLGSCIGIAIYDTRNTVAGLVHVMLPSAADIDGGNHAKFADTGIQALIEAMADAGASTEAMEAKIAGGSDMLDFSENGSSIGSRNAKKVRETLDEHGVPVVGEDLGGDHGRSVKLEADTGNFIVKSANTDSITL</sequence>
<protein>
    <recommendedName>
        <fullName evidence="1">Probable chemoreceptor glutamine deamidase CheD</fullName>
        <ecNumber evidence="1">3.5.1.44</ecNumber>
    </recommendedName>
</protein>
<keyword id="KW-0145">Chemotaxis</keyword>
<keyword id="KW-0378">Hydrolase</keyword>
<keyword id="KW-1185">Reference proteome</keyword>
<organism>
    <name type="scientific">Haloarcula marismortui (strain ATCC 43049 / DSM 3752 / JCM 8966 / VKM B-1809)</name>
    <name type="common">Halobacterium marismortui</name>
    <dbReference type="NCBI Taxonomy" id="272569"/>
    <lineage>
        <taxon>Archaea</taxon>
        <taxon>Methanobacteriati</taxon>
        <taxon>Methanobacteriota</taxon>
        <taxon>Stenosarchaea group</taxon>
        <taxon>Halobacteria</taxon>
        <taxon>Halobacteriales</taxon>
        <taxon>Haloarculaceae</taxon>
        <taxon>Haloarcula</taxon>
    </lineage>
</organism>
<evidence type="ECO:0000255" key="1">
    <source>
        <dbReference type="HAMAP-Rule" id="MF_01440"/>
    </source>
</evidence>
<feature type="chain" id="PRO_0000251087" description="Probable chemoreceptor glutamine deamidase CheD">
    <location>
        <begin position="1"/>
        <end position="173"/>
    </location>
</feature>
<gene>
    <name evidence="1" type="primary">cheD</name>
    <name type="ordered locus">rrnAC2192</name>
</gene>
<comment type="function">
    <text evidence="1">Probably deamidates glutamine residues to glutamate on methyl-accepting chemotaxis receptors (MCPs), playing an important role in chemotaxis.</text>
</comment>
<comment type="catalytic activity">
    <reaction evidence="1">
        <text>L-glutaminyl-[protein] + H2O = L-glutamyl-[protein] + NH4(+)</text>
        <dbReference type="Rhea" id="RHEA:16441"/>
        <dbReference type="Rhea" id="RHEA-COMP:10207"/>
        <dbReference type="Rhea" id="RHEA-COMP:10208"/>
        <dbReference type="ChEBI" id="CHEBI:15377"/>
        <dbReference type="ChEBI" id="CHEBI:28938"/>
        <dbReference type="ChEBI" id="CHEBI:29973"/>
        <dbReference type="ChEBI" id="CHEBI:30011"/>
        <dbReference type="EC" id="3.5.1.44"/>
    </reaction>
</comment>
<comment type="similarity">
    <text evidence="1">Belongs to the CheD family.</text>
</comment>
<proteinExistence type="inferred from homology"/>
<name>CHED_HALMA</name>
<accession>Q5V0C3</accession>
<dbReference type="EC" id="3.5.1.44" evidence="1"/>
<dbReference type="EMBL" id="AY596297">
    <property type="protein sequence ID" value="AAV47030.1"/>
    <property type="molecule type" value="Genomic_DNA"/>
</dbReference>
<dbReference type="RefSeq" id="WP_011224079.1">
    <property type="nucleotide sequence ID" value="NC_006396.1"/>
</dbReference>
<dbReference type="SMR" id="Q5V0C3"/>
<dbReference type="STRING" id="272569.rrnAC2192"/>
<dbReference type="PaxDb" id="272569-rrnAC2192"/>
<dbReference type="EnsemblBacteria" id="AAV47030">
    <property type="protein sequence ID" value="AAV47030"/>
    <property type="gene ID" value="rrnAC2192"/>
</dbReference>
<dbReference type="GeneID" id="40153094"/>
<dbReference type="KEGG" id="hma:rrnAC2192"/>
<dbReference type="PATRIC" id="fig|272569.17.peg.2828"/>
<dbReference type="eggNOG" id="arCOG02380">
    <property type="taxonomic scope" value="Archaea"/>
</dbReference>
<dbReference type="HOGENOM" id="CLU_087854_2_0_2"/>
<dbReference type="Proteomes" id="UP000001169">
    <property type="component" value="Chromosome I"/>
</dbReference>
<dbReference type="GO" id="GO:0050568">
    <property type="term" value="F:protein-glutamine glutaminase activity"/>
    <property type="evidence" value="ECO:0007669"/>
    <property type="project" value="UniProtKB-UniRule"/>
</dbReference>
<dbReference type="GO" id="GO:0006935">
    <property type="term" value="P:chemotaxis"/>
    <property type="evidence" value="ECO:0007669"/>
    <property type="project" value="UniProtKB-UniRule"/>
</dbReference>
<dbReference type="CDD" id="cd16352">
    <property type="entry name" value="CheD"/>
    <property type="match status" value="1"/>
</dbReference>
<dbReference type="Gene3D" id="3.30.1330.200">
    <property type="match status" value="1"/>
</dbReference>
<dbReference type="HAMAP" id="MF_01440">
    <property type="entry name" value="CheD"/>
    <property type="match status" value="1"/>
</dbReference>
<dbReference type="InterPro" id="IPR038592">
    <property type="entry name" value="CheD-like_sf"/>
</dbReference>
<dbReference type="InterPro" id="IPR005659">
    <property type="entry name" value="Chemorcpt_Glu_NH3ase_CheD"/>
</dbReference>
<dbReference type="InterPro" id="IPR011324">
    <property type="entry name" value="Cytotoxic_necrot_fac-like_cat"/>
</dbReference>
<dbReference type="PANTHER" id="PTHR35147">
    <property type="entry name" value="CHEMORECEPTOR GLUTAMINE DEAMIDASE CHED-RELATED"/>
    <property type="match status" value="1"/>
</dbReference>
<dbReference type="PANTHER" id="PTHR35147:SF1">
    <property type="entry name" value="CHEMORECEPTOR GLUTAMINE DEAMIDASE CHED-RELATED"/>
    <property type="match status" value="1"/>
</dbReference>
<dbReference type="Pfam" id="PF03975">
    <property type="entry name" value="CheD"/>
    <property type="match status" value="1"/>
</dbReference>
<dbReference type="SUPFAM" id="SSF64438">
    <property type="entry name" value="CNF1/YfiH-like putative cysteine hydrolases"/>
    <property type="match status" value="1"/>
</dbReference>
<reference key="1">
    <citation type="journal article" date="2004" name="Genome Res.">
        <title>Genome sequence of Haloarcula marismortui: a halophilic archaeon from the Dead Sea.</title>
        <authorList>
            <person name="Baliga N.S."/>
            <person name="Bonneau R."/>
            <person name="Facciotti M.T."/>
            <person name="Pan M."/>
            <person name="Glusman G."/>
            <person name="Deutsch E.W."/>
            <person name="Shannon P."/>
            <person name="Chiu Y."/>
            <person name="Weng R.S."/>
            <person name="Gan R.R."/>
            <person name="Hung P."/>
            <person name="Date S.V."/>
            <person name="Marcotte E."/>
            <person name="Hood L."/>
            <person name="Ng W.V."/>
        </authorList>
    </citation>
    <scope>NUCLEOTIDE SEQUENCE [LARGE SCALE GENOMIC DNA]</scope>
    <source>
        <strain>ATCC 43049 / DSM 3752 / JCM 8966 / VKM B-1809</strain>
    </source>
</reference>